<feature type="chain" id="PRO_1000012305" description="Lipoyl synthase">
    <location>
        <begin position="1"/>
        <end position="321"/>
    </location>
</feature>
<feature type="domain" description="Radical SAM core" evidence="2">
    <location>
        <begin position="80"/>
        <end position="297"/>
    </location>
</feature>
<feature type="binding site" evidence="1">
    <location>
        <position position="68"/>
    </location>
    <ligand>
        <name>[4Fe-4S] cluster</name>
        <dbReference type="ChEBI" id="CHEBI:49883"/>
        <label>1</label>
    </ligand>
</feature>
<feature type="binding site" evidence="1">
    <location>
        <position position="73"/>
    </location>
    <ligand>
        <name>[4Fe-4S] cluster</name>
        <dbReference type="ChEBI" id="CHEBI:49883"/>
        <label>1</label>
    </ligand>
</feature>
<feature type="binding site" evidence="1">
    <location>
        <position position="79"/>
    </location>
    <ligand>
        <name>[4Fe-4S] cluster</name>
        <dbReference type="ChEBI" id="CHEBI:49883"/>
        <label>1</label>
    </ligand>
</feature>
<feature type="binding site" evidence="1">
    <location>
        <position position="94"/>
    </location>
    <ligand>
        <name>[4Fe-4S] cluster</name>
        <dbReference type="ChEBI" id="CHEBI:49883"/>
        <label>2</label>
        <note>4Fe-4S-S-AdoMet</note>
    </ligand>
</feature>
<feature type="binding site" evidence="1">
    <location>
        <position position="98"/>
    </location>
    <ligand>
        <name>[4Fe-4S] cluster</name>
        <dbReference type="ChEBI" id="CHEBI:49883"/>
        <label>2</label>
        <note>4Fe-4S-S-AdoMet</note>
    </ligand>
</feature>
<feature type="binding site" evidence="1">
    <location>
        <position position="101"/>
    </location>
    <ligand>
        <name>[4Fe-4S] cluster</name>
        <dbReference type="ChEBI" id="CHEBI:49883"/>
        <label>2</label>
        <note>4Fe-4S-S-AdoMet</note>
    </ligand>
</feature>
<feature type="binding site" evidence="1">
    <location>
        <position position="308"/>
    </location>
    <ligand>
        <name>[4Fe-4S] cluster</name>
        <dbReference type="ChEBI" id="CHEBI:49883"/>
        <label>1</label>
    </ligand>
</feature>
<organism>
    <name type="scientific">Yersinia pseudotuberculosis serotype I (strain IP32953)</name>
    <dbReference type="NCBI Taxonomy" id="273123"/>
    <lineage>
        <taxon>Bacteria</taxon>
        <taxon>Pseudomonadati</taxon>
        <taxon>Pseudomonadota</taxon>
        <taxon>Gammaproteobacteria</taxon>
        <taxon>Enterobacterales</taxon>
        <taxon>Yersiniaceae</taxon>
        <taxon>Yersinia</taxon>
    </lineage>
</organism>
<proteinExistence type="inferred from homology"/>
<gene>
    <name evidence="1" type="primary">lipA</name>
    <name type="ordered locus">YPTB1091</name>
</gene>
<accession>Q66DF5</accession>
<name>LIPA_YERPS</name>
<keyword id="KW-0004">4Fe-4S</keyword>
<keyword id="KW-0963">Cytoplasm</keyword>
<keyword id="KW-0408">Iron</keyword>
<keyword id="KW-0411">Iron-sulfur</keyword>
<keyword id="KW-0479">Metal-binding</keyword>
<keyword id="KW-0949">S-adenosyl-L-methionine</keyword>
<keyword id="KW-0808">Transferase</keyword>
<protein>
    <recommendedName>
        <fullName evidence="1">Lipoyl synthase</fullName>
        <ecNumber evidence="1">2.8.1.8</ecNumber>
    </recommendedName>
    <alternativeName>
        <fullName evidence="1">Lip-syn</fullName>
        <shortName evidence="1">LS</shortName>
    </alternativeName>
    <alternativeName>
        <fullName evidence="1">Lipoate synthase</fullName>
    </alternativeName>
    <alternativeName>
        <fullName evidence="1">Lipoic acid synthase</fullName>
    </alternativeName>
    <alternativeName>
        <fullName evidence="1">Sulfur insertion protein LipA</fullName>
    </alternativeName>
</protein>
<comment type="function">
    <text evidence="1">Catalyzes the radical-mediated insertion of two sulfur atoms into the C-6 and C-8 positions of the octanoyl moiety bound to the lipoyl domains of lipoate-dependent enzymes, thereby converting the octanoylated domains into lipoylated derivatives.</text>
</comment>
<comment type="catalytic activity">
    <reaction evidence="1">
        <text>[[Fe-S] cluster scaffold protein carrying a second [4Fe-4S](2+) cluster] + N(6)-octanoyl-L-lysyl-[protein] + 2 oxidized [2Fe-2S]-[ferredoxin] + 2 S-adenosyl-L-methionine + 4 H(+) = [[Fe-S] cluster scaffold protein] + N(6)-[(R)-dihydrolipoyl]-L-lysyl-[protein] + 4 Fe(3+) + 2 hydrogen sulfide + 2 5'-deoxyadenosine + 2 L-methionine + 2 reduced [2Fe-2S]-[ferredoxin]</text>
        <dbReference type="Rhea" id="RHEA:16585"/>
        <dbReference type="Rhea" id="RHEA-COMP:9928"/>
        <dbReference type="Rhea" id="RHEA-COMP:10000"/>
        <dbReference type="Rhea" id="RHEA-COMP:10001"/>
        <dbReference type="Rhea" id="RHEA-COMP:10475"/>
        <dbReference type="Rhea" id="RHEA-COMP:14568"/>
        <dbReference type="Rhea" id="RHEA-COMP:14569"/>
        <dbReference type="ChEBI" id="CHEBI:15378"/>
        <dbReference type="ChEBI" id="CHEBI:17319"/>
        <dbReference type="ChEBI" id="CHEBI:29034"/>
        <dbReference type="ChEBI" id="CHEBI:29919"/>
        <dbReference type="ChEBI" id="CHEBI:33722"/>
        <dbReference type="ChEBI" id="CHEBI:33737"/>
        <dbReference type="ChEBI" id="CHEBI:33738"/>
        <dbReference type="ChEBI" id="CHEBI:57844"/>
        <dbReference type="ChEBI" id="CHEBI:59789"/>
        <dbReference type="ChEBI" id="CHEBI:78809"/>
        <dbReference type="ChEBI" id="CHEBI:83100"/>
        <dbReference type="EC" id="2.8.1.8"/>
    </reaction>
</comment>
<comment type="cofactor">
    <cofactor evidence="1">
        <name>[4Fe-4S] cluster</name>
        <dbReference type="ChEBI" id="CHEBI:49883"/>
    </cofactor>
    <text evidence="1">Binds 2 [4Fe-4S] clusters per subunit. One cluster is coordinated with 3 cysteines and an exchangeable S-adenosyl-L-methionine.</text>
</comment>
<comment type="pathway">
    <text evidence="1">Protein modification; protein lipoylation via endogenous pathway; protein N(6)-(lipoyl)lysine from octanoyl-[acyl-carrier-protein]: step 2/2.</text>
</comment>
<comment type="subcellular location">
    <subcellularLocation>
        <location evidence="1">Cytoplasm</location>
    </subcellularLocation>
</comment>
<comment type="similarity">
    <text evidence="1">Belongs to the radical SAM superfamily. Lipoyl synthase family.</text>
</comment>
<dbReference type="EC" id="2.8.1.8" evidence="1"/>
<dbReference type="EMBL" id="BX936398">
    <property type="protein sequence ID" value="CAH20331.1"/>
    <property type="molecule type" value="Genomic_DNA"/>
</dbReference>
<dbReference type="RefSeq" id="WP_002210320.1">
    <property type="nucleotide sequence ID" value="NZ_CP009712.1"/>
</dbReference>
<dbReference type="SMR" id="Q66DF5"/>
<dbReference type="GeneID" id="96664611"/>
<dbReference type="KEGG" id="ypo:BZ17_1452"/>
<dbReference type="KEGG" id="yps:YPTB1091"/>
<dbReference type="PATRIC" id="fig|273123.14.peg.1536"/>
<dbReference type="UniPathway" id="UPA00538">
    <property type="reaction ID" value="UER00593"/>
</dbReference>
<dbReference type="Proteomes" id="UP000001011">
    <property type="component" value="Chromosome"/>
</dbReference>
<dbReference type="GO" id="GO:0005737">
    <property type="term" value="C:cytoplasm"/>
    <property type="evidence" value="ECO:0007669"/>
    <property type="project" value="UniProtKB-SubCell"/>
</dbReference>
<dbReference type="GO" id="GO:0051539">
    <property type="term" value="F:4 iron, 4 sulfur cluster binding"/>
    <property type="evidence" value="ECO:0007669"/>
    <property type="project" value="UniProtKB-UniRule"/>
</dbReference>
<dbReference type="GO" id="GO:0016992">
    <property type="term" value="F:lipoate synthase activity"/>
    <property type="evidence" value="ECO:0007669"/>
    <property type="project" value="UniProtKB-UniRule"/>
</dbReference>
<dbReference type="GO" id="GO:0046872">
    <property type="term" value="F:metal ion binding"/>
    <property type="evidence" value="ECO:0007669"/>
    <property type="project" value="UniProtKB-KW"/>
</dbReference>
<dbReference type="CDD" id="cd01335">
    <property type="entry name" value="Radical_SAM"/>
    <property type="match status" value="1"/>
</dbReference>
<dbReference type="FunFam" id="3.20.20.70:FF:000023">
    <property type="entry name" value="Lipoyl synthase"/>
    <property type="match status" value="1"/>
</dbReference>
<dbReference type="Gene3D" id="3.20.20.70">
    <property type="entry name" value="Aldolase class I"/>
    <property type="match status" value="1"/>
</dbReference>
<dbReference type="HAMAP" id="MF_00206">
    <property type="entry name" value="Lipoyl_synth"/>
    <property type="match status" value="1"/>
</dbReference>
<dbReference type="InterPro" id="IPR013785">
    <property type="entry name" value="Aldolase_TIM"/>
</dbReference>
<dbReference type="InterPro" id="IPR006638">
    <property type="entry name" value="Elp3/MiaA/NifB-like_rSAM"/>
</dbReference>
<dbReference type="InterPro" id="IPR031691">
    <property type="entry name" value="LIAS_N"/>
</dbReference>
<dbReference type="InterPro" id="IPR003698">
    <property type="entry name" value="Lipoyl_synth"/>
</dbReference>
<dbReference type="InterPro" id="IPR007197">
    <property type="entry name" value="rSAM"/>
</dbReference>
<dbReference type="NCBIfam" id="TIGR00510">
    <property type="entry name" value="lipA"/>
    <property type="match status" value="1"/>
</dbReference>
<dbReference type="NCBIfam" id="NF004019">
    <property type="entry name" value="PRK05481.1"/>
    <property type="match status" value="1"/>
</dbReference>
<dbReference type="NCBIfam" id="NF009544">
    <property type="entry name" value="PRK12928.1"/>
    <property type="match status" value="1"/>
</dbReference>
<dbReference type="PANTHER" id="PTHR10949">
    <property type="entry name" value="LIPOYL SYNTHASE"/>
    <property type="match status" value="1"/>
</dbReference>
<dbReference type="PANTHER" id="PTHR10949:SF0">
    <property type="entry name" value="LIPOYL SYNTHASE, MITOCHONDRIAL"/>
    <property type="match status" value="1"/>
</dbReference>
<dbReference type="Pfam" id="PF16881">
    <property type="entry name" value="LIAS_N"/>
    <property type="match status" value="1"/>
</dbReference>
<dbReference type="Pfam" id="PF04055">
    <property type="entry name" value="Radical_SAM"/>
    <property type="match status" value="1"/>
</dbReference>
<dbReference type="PIRSF" id="PIRSF005963">
    <property type="entry name" value="Lipoyl_synth"/>
    <property type="match status" value="1"/>
</dbReference>
<dbReference type="SFLD" id="SFLDF00271">
    <property type="entry name" value="lipoyl_synthase"/>
    <property type="match status" value="1"/>
</dbReference>
<dbReference type="SFLD" id="SFLDG01058">
    <property type="entry name" value="lipoyl_synthase_like"/>
    <property type="match status" value="1"/>
</dbReference>
<dbReference type="SMART" id="SM00729">
    <property type="entry name" value="Elp3"/>
    <property type="match status" value="1"/>
</dbReference>
<dbReference type="SUPFAM" id="SSF102114">
    <property type="entry name" value="Radical SAM enzymes"/>
    <property type="match status" value="1"/>
</dbReference>
<dbReference type="PROSITE" id="PS51918">
    <property type="entry name" value="RADICAL_SAM"/>
    <property type="match status" value="1"/>
</dbReference>
<sequence>MSKPIQMERGVKYRDADKMALIPVKNVVTERQELLRKPEWLKIKLPTDSSRIQGIKAAMRKNGLHSVCEEASCPNLSECFNHGTATFMILGAICTRRCPFCDVAHGRPVTPDANEPEKLAQTIQDMGLRYVVITSVDRDDLRDGGAQHFADCISAIRAKNPTIKIETLVPDFRGRMDRALDILTATPPDVFNHNLENVPRVYRQVRPGANYDWSLKLLERFKEAHPDIPTKSGLMVGLGETNAEIVEVMHDLRRHGVTMLTLGQYLQPSRHHLPVQRYVSPAEFDEMKAEAMAMGFTHAACGPFVRSSYHADLQAKGMEVK</sequence>
<evidence type="ECO:0000255" key="1">
    <source>
        <dbReference type="HAMAP-Rule" id="MF_00206"/>
    </source>
</evidence>
<evidence type="ECO:0000255" key="2">
    <source>
        <dbReference type="PROSITE-ProRule" id="PRU01266"/>
    </source>
</evidence>
<reference key="1">
    <citation type="journal article" date="2004" name="Proc. Natl. Acad. Sci. U.S.A.">
        <title>Insights into the evolution of Yersinia pestis through whole-genome comparison with Yersinia pseudotuberculosis.</title>
        <authorList>
            <person name="Chain P.S.G."/>
            <person name="Carniel E."/>
            <person name="Larimer F.W."/>
            <person name="Lamerdin J."/>
            <person name="Stoutland P.O."/>
            <person name="Regala W.M."/>
            <person name="Georgescu A.M."/>
            <person name="Vergez L.M."/>
            <person name="Land M.L."/>
            <person name="Motin V.L."/>
            <person name="Brubaker R.R."/>
            <person name="Fowler J."/>
            <person name="Hinnebusch J."/>
            <person name="Marceau M."/>
            <person name="Medigue C."/>
            <person name="Simonet M."/>
            <person name="Chenal-Francisque V."/>
            <person name="Souza B."/>
            <person name="Dacheux D."/>
            <person name="Elliott J.M."/>
            <person name="Derbise A."/>
            <person name="Hauser L.J."/>
            <person name="Garcia E."/>
        </authorList>
    </citation>
    <scope>NUCLEOTIDE SEQUENCE [LARGE SCALE GENOMIC DNA]</scope>
    <source>
        <strain>IP32953</strain>
    </source>
</reference>